<organism>
    <name type="scientific">Pinus koraiensis</name>
    <name type="common">Korean pine</name>
    <dbReference type="NCBI Taxonomy" id="88728"/>
    <lineage>
        <taxon>Eukaryota</taxon>
        <taxon>Viridiplantae</taxon>
        <taxon>Streptophyta</taxon>
        <taxon>Embryophyta</taxon>
        <taxon>Tracheophyta</taxon>
        <taxon>Spermatophyta</taxon>
        <taxon>Pinopsida</taxon>
        <taxon>Pinidae</taxon>
        <taxon>Conifers I</taxon>
        <taxon>Pinales</taxon>
        <taxon>Pinaceae</taxon>
        <taxon>Pinus</taxon>
        <taxon>Pinus subgen. Strobus</taxon>
    </lineage>
</organism>
<gene>
    <name evidence="1" type="primary">petB</name>
</gene>
<protein>
    <recommendedName>
        <fullName evidence="1">Cytochrome b6</fullName>
    </recommendedName>
</protein>
<evidence type="ECO:0000255" key="1">
    <source>
        <dbReference type="HAMAP-Rule" id="MF_00633"/>
    </source>
</evidence>
<keyword id="KW-0150">Chloroplast</keyword>
<keyword id="KW-0249">Electron transport</keyword>
<keyword id="KW-0349">Heme</keyword>
<keyword id="KW-0408">Iron</keyword>
<keyword id="KW-0472">Membrane</keyword>
<keyword id="KW-0479">Metal-binding</keyword>
<keyword id="KW-0602">Photosynthesis</keyword>
<keyword id="KW-0934">Plastid</keyword>
<keyword id="KW-0793">Thylakoid</keyword>
<keyword id="KW-0812">Transmembrane</keyword>
<keyword id="KW-1133">Transmembrane helix</keyword>
<keyword id="KW-0813">Transport</keyword>
<dbReference type="EMBL" id="AY228468">
    <property type="protein sequence ID" value="AAO74060.1"/>
    <property type="molecule type" value="Genomic_DNA"/>
</dbReference>
<dbReference type="RefSeq" id="NP_817212.1">
    <property type="nucleotide sequence ID" value="NC_004677.2"/>
</dbReference>
<dbReference type="SMR" id="Q85X07"/>
<dbReference type="GeneID" id="806931"/>
<dbReference type="GO" id="GO:0009535">
    <property type="term" value="C:chloroplast thylakoid membrane"/>
    <property type="evidence" value="ECO:0007669"/>
    <property type="project" value="UniProtKB-SubCell"/>
</dbReference>
<dbReference type="GO" id="GO:0045158">
    <property type="term" value="F:electron transporter, transferring electrons within cytochrome b6/f complex of photosystem II activity"/>
    <property type="evidence" value="ECO:0007669"/>
    <property type="project" value="UniProtKB-UniRule"/>
</dbReference>
<dbReference type="GO" id="GO:0046872">
    <property type="term" value="F:metal ion binding"/>
    <property type="evidence" value="ECO:0007669"/>
    <property type="project" value="UniProtKB-KW"/>
</dbReference>
<dbReference type="GO" id="GO:0016491">
    <property type="term" value="F:oxidoreductase activity"/>
    <property type="evidence" value="ECO:0007669"/>
    <property type="project" value="InterPro"/>
</dbReference>
<dbReference type="GO" id="GO:0015979">
    <property type="term" value="P:photosynthesis"/>
    <property type="evidence" value="ECO:0007669"/>
    <property type="project" value="UniProtKB-UniRule"/>
</dbReference>
<dbReference type="GO" id="GO:0022904">
    <property type="term" value="P:respiratory electron transport chain"/>
    <property type="evidence" value="ECO:0007669"/>
    <property type="project" value="InterPro"/>
</dbReference>
<dbReference type="CDD" id="cd00284">
    <property type="entry name" value="Cytochrome_b_N"/>
    <property type="match status" value="1"/>
</dbReference>
<dbReference type="FunFam" id="1.20.810.10:FF:000001">
    <property type="entry name" value="Cytochrome b6"/>
    <property type="match status" value="1"/>
</dbReference>
<dbReference type="Gene3D" id="1.20.810.10">
    <property type="entry name" value="Cytochrome Bc1 Complex, Chain C"/>
    <property type="match status" value="1"/>
</dbReference>
<dbReference type="HAMAP" id="MF_00633">
    <property type="entry name" value="Cytb6_f_cytb6"/>
    <property type="match status" value="1"/>
</dbReference>
<dbReference type="InterPro" id="IPR005797">
    <property type="entry name" value="Cyt_b/b6_N"/>
</dbReference>
<dbReference type="InterPro" id="IPR023530">
    <property type="entry name" value="Cyt_B6_PetB"/>
</dbReference>
<dbReference type="InterPro" id="IPR027387">
    <property type="entry name" value="Cytb/b6-like_sf"/>
</dbReference>
<dbReference type="InterPro" id="IPR048259">
    <property type="entry name" value="Cytochrome_b_N_euk/bac"/>
</dbReference>
<dbReference type="InterPro" id="IPR016174">
    <property type="entry name" value="Di-haem_cyt_TM"/>
</dbReference>
<dbReference type="NCBIfam" id="NF002990">
    <property type="entry name" value="PRK03735.1"/>
    <property type="match status" value="1"/>
</dbReference>
<dbReference type="PANTHER" id="PTHR19271">
    <property type="entry name" value="CYTOCHROME B"/>
    <property type="match status" value="1"/>
</dbReference>
<dbReference type="PANTHER" id="PTHR19271:SF16">
    <property type="entry name" value="CYTOCHROME B"/>
    <property type="match status" value="1"/>
</dbReference>
<dbReference type="Pfam" id="PF00033">
    <property type="entry name" value="Cytochrome_B"/>
    <property type="match status" value="1"/>
</dbReference>
<dbReference type="PIRSF" id="PIRSF000032">
    <property type="entry name" value="Cytochrome_b6"/>
    <property type="match status" value="1"/>
</dbReference>
<dbReference type="SUPFAM" id="SSF81342">
    <property type="entry name" value="Transmembrane di-heme cytochromes"/>
    <property type="match status" value="1"/>
</dbReference>
<dbReference type="PROSITE" id="PS51002">
    <property type="entry name" value="CYTB_NTER"/>
    <property type="match status" value="1"/>
</dbReference>
<name>CYB6_PINKO</name>
<comment type="function">
    <text evidence="1">Component of the cytochrome b6-f complex, which mediates electron transfer between photosystem II (PSII) and photosystem I (PSI), cyclic electron flow around PSI, and state transitions.</text>
</comment>
<comment type="cofactor">
    <cofactor evidence="1">
        <name>heme b</name>
        <dbReference type="ChEBI" id="CHEBI:60344"/>
    </cofactor>
    <text evidence="1">Binds 2 heme b groups non-covalently with two histidine residues as axial ligands.</text>
</comment>
<comment type="cofactor">
    <cofactor evidence="1">
        <name>heme c</name>
        <dbReference type="ChEBI" id="CHEBI:61717"/>
    </cofactor>
    <text evidence="1">Binds one heme group covalently by a single cysteine link with no axial amino acid ligand. This heme was named heme ci.</text>
</comment>
<comment type="subunit">
    <text evidence="1">The 4 large subunits of the cytochrome b6-f complex are cytochrome b6, subunit IV (17 kDa polypeptide, PetD), cytochrome f and the Rieske protein, while the 4 small subunits are PetG, PetL, PetM and PetN. The complex functions as a dimer.</text>
</comment>
<comment type="subcellular location">
    <subcellularLocation>
        <location evidence="1">Plastid</location>
        <location evidence="1">Chloroplast thylakoid membrane</location>
        <topology evidence="1">Multi-pass membrane protein</topology>
    </subcellularLocation>
</comment>
<comment type="miscellaneous">
    <text evidence="1">Heme 1 (or BH or b566) is high-potential and absorbs at about 566 nm, and heme 2 (or BL or b562) is low-potential and absorbs at about 562 nm.</text>
</comment>
<comment type="similarity">
    <text evidence="1">Belongs to the cytochrome b family. PetB subfamily.</text>
</comment>
<geneLocation type="chloroplast"/>
<accession>Q85X07</accession>
<reference key="1">
    <citation type="submission" date="2003-02" db="EMBL/GenBank/DDBJ databases">
        <title>Complete nucleotide sequence of Pinus koraiensis.</title>
        <authorList>
            <person name="Noh E.W."/>
            <person name="Lee J.S."/>
            <person name="Choi Y.I."/>
            <person name="Han M.S."/>
            <person name="Yi Y.S."/>
            <person name="Han S.U."/>
        </authorList>
    </citation>
    <scope>NUCLEOTIDE SEQUENCE [LARGE SCALE GENOMIC DNA]</scope>
    <source>
        <strain>KangWon16</strain>
    </source>
</reference>
<sequence length="215" mass="24231">MGKVYDRFEERLEIQAIADDITSKYVPPHVNIFYCLGGITLTCFLVQVATGFAMTFYYRPTVTEAFASVQYLMTEVNFGWLIRSIHRWSASMMVLMMILHVFRVYLTGGFKKPRELTWVTGVILAVLTVSFGVTGYSLPWDQIGYWAVKIVTGVPEAIPVIGSPLVELLRGSVSVGQSTLTRFYSLHTFILPLLTAVFMPMHFLMIRKQGISGPL</sequence>
<proteinExistence type="inferred from homology"/>
<feature type="chain" id="PRO_0000061814" description="Cytochrome b6">
    <location>
        <begin position="1"/>
        <end position="215"/>
    </location>
</feature>
<feature type="transmembrane region" description="Helical" evidence="1">
    <location>
        <begin position="32"/>
        <end position="52"/>
    </location>
</feature>
<feature type="transmembrane region" description="Helical" evidence="1">
    <location>
        <begin position="90"/>
        <end position="110"/>
    </location>
</feature>
<feature type="transmembrane region" description="Helical" evidence="1">
    <location>
        <begin position="116"/>
        <end position="136"/>
    </location>
</feature>
<feature type="transmembrane region" description="Helical" evidence="1">
    <location>
        <begin position="186"/>
        <end position="206"/>
    </location>
</feature>
<feature type="binding site" description="covalent" evidence="1">
    <location>
        <position position="35"/>
    </location>
    <ligand>
        <name>heme c</name>
        <dbReference type="ChEBI" id="CHEBI:61717"/>
    </ligand>
</feature>
<feature type="binding site" description="axial binding residue" evidence="1">
    <location>
        <position position="86"/>
    </location>
    <ligand>
        <name>heme b</name>
        <dbReference type="ChEBI" id="CHEBI:60344"/>
        <label>2</label>
    </ligand>
    <ligandPart>
        <name>Fe</name>
        <dbReference type="ChEBI" id="CHEBI:18248"/>
    </ligandPart>
</feature>
<feature type="binding site" description="axial binding residue" evidence="1">
    <location>
        <position position="100"/>
    </location>
    <ligand>
        <name>heme b</name>
        <dbReference type="ChEBI" id="CHEBI:60344"/>
        <label>1</label>
    </ligand>
    <ligandPart>
        <name>Fe</name>
        <dbReference type="ChEBI" id="CHEBI:18248"/>
    </ligandPart>
</feature>
<feature type="binding site" description="axial binding residue" evidence="1">
    <location>
        <position position="187"/>
    </location>
    <ligand>
        <name>heme b</name>
        <dbReference type="ChEBI" id="CHEBI:60344"/>
        <label>2</label>
    </ligand>
    <ligandPart>
        <name>Fe</name>
        <dbReference type="ChEBI" id="CHEBI:18248"/>
    </ligandPart>
</feature>
<feature type="binding site" description="axial binding residue" evidence="1">
    <location>
        <position position="202"/>
    </location>
    <ligand>
        <name>heme b</name>
        <dbReference type="ChEBI" id="CHEBI:60344"/>
        <label>1</label>
    </ligand>
    <ligandPart>
        <name>Fe</name>
        <dbReference type="ChEBI" id="CHEBI:18248"/>
    </ligandPart>
</feature>